<gene>
    <name evidence="1" type="primary">proB</name>
    <name type="ordered locus">VIBHAR_01162</name>
</gene>
<comment type="function">
    <text evidence="1">Catalyzes the transfer of a phosphate group to glutamate to form L-glutamate 5-phosphate.</text>
</comment>
<comment type="catalytic activity">
    <reaction evidence="1">
        <text>L-glutamate + ATP = L-glutamyl 5-phosphate + ADP</text>
        <dbReference type="Rhea" id="RHEA:14877"/>
        <dbReference type="ChEBI" id="CHEBI:29985"/>
        <dbReference type="ChEBI" id="CHEBI:30616"/>
        <dbReference type="ChEBI" id="CHEBI:58274"/>
        <dbReference type="ChEBI" id="CHEBI:456216"/>
        <dbReference type="EC" id="2.7.2.11"/>
    </reaction>
</comment>
<comment type="pathway">
    <text evidence="1">Amino-acid biosynthesis; L-proline biosynthesis; L-glutamate 5-semialdehyde from L-glutamate: step 1/2.</text>
</comment>
<comment type="subcellular location">
    <subcellularLocation>
        <location evidence="1">Cytoplasm</location>
    </subcellularLocation>
</comment>
<comment type="similarity">
    <text evidence="1">Belongs to the glutamate 5-kinase family.</text>
</comment>
<dbReference type="EC" id="2.7.2.11" evidence="1"/>
<dbReference type="EMBL" id="CP000789">
    <property type="protein sequence ID" value="ABU70152.1"/>
    <property type="molecule type" value="Genomic_DNA"/>
</dbReference>
<dbReference type="RefSeq" id="WP_005424865.1">
    <property type="nucleotide sequence ID" value="NC_022269.1"/>
</dbReference>
<dbReference type="SMR" id="A7MWT6"/>
<dbReference type="GeneID" id="67378243"/>
<dbReference type="KEGG" id="vha:VIBHAR_01162"/>
<dbReference type="PATRIC" id="fig|338187.25.peg.1466"/>
<dbReference type="UniPathway" id="UPA00098">
    <property type="reaction ID" value="UER00359"/>
</dbReference>
<dbReference type="Proteomes" id="UP000008152">
    <property type="component" value="Chromosome I"/>
</dbReference>
<dbReference type="GO" id="GO:0005829">
    <property type="term" value="C:cytosol"/>
    <property type="evidence" value="ECO:0007669"/>
    <property type="project" value="TreeGrafter"/>
</dbReference>
<dbReference type="GO" id="GO:0005524">
    <property type="term" value="F:ATP binding"/>
    <property type="evidence" value="ECO:0007669"/>
    <property type="project" value="UniProtKB-KW"/>
</dbReference>
<dbReference type="GO" id="GO:0004349">
    <property type="term" value="F:glutamate 5-kinase activity"/>
    <property type="evidence" value="ECO:0007669"/>
    <property type="project" value="UniProtKB-UniRule"/>
</dbReference>
<dbReference type="GO" id="GO:0003723">
    <property type="term" value="F:RNA binding"/>
    <property type="evidence" value="ECO:0007669"/>
    <property type="project" value="InterPro"/>
</dbReference>
<dbReference type="GO" id="GO:0055129">
    <property type="term" value="P:L-proline biosynthetic process"/>
    <property type="evidence" value="ECO:0007669"/>
    <property type="project" value="UniProtKB-UniRule"/>
</dbReference>
<dbReference type="CDD" id="cd04242">
    <property type="entry name" value="AAK_G5K_ProB"/>
    <property type="match status" value="1"/>
</dbReference>
<dbReference type="CDD" id="cd21157">
    <property type="entry name" value="PUA_G5K"/>
    <property type="match status" value="1"/>
</dbReference>
<dbReference type="FunFam" id="2.30.130.10:FF:000007">
    <property type="entry name" value="Glutamate 5-kinase"/>
    <property type="match status" value="1"/>
</dbReference>
<dbReference type="FunFam" id="3.40.1160.10:FF:000006">
    <property type="entry name" value="Glutamate 5-kinase"/>
    <property type="match status" value="1"/>
</dbReference>
<dbReference type="Gene3D" id="3.40.1160.10">
    <property type="entry name" value="Acetylglutamate kinase-like"/>
    <property type="match status" value="2"/>
</dbReference>
<dbReference type="Gene3D" id="2.30.130.10">
    <property type="entry name" value="PUA domain"/>
    <property type="match status" value="1"/>
</dbReference>
<dbReference type="HAMAP" id="MF_00456">
    <property type="entry name" value="ProB"/>
    <property type="match status" value="1"/>
</dbReference>
<dbReference type="InterPro" id="IPR036393">
    <property type="entry name" value="AceGlu_kinase-like_sf"/>
</dbReference>
<dbReference type="InterPro" id="IPR001048">
    <property type="entry name" value="Asp/Glu/Uridylate_kinase"/>
</dbReference>
<dbReference type="InterPro" id="IPR041739">
    <property type="entry name" value="G5K_ProB"/>
</dbReference>
<dbReference type="InterPro" id="IPR001057">
    <property type="entry name" value="Glu/AcGlu_kinase"/>
</dbReference>
<dbReference type="InterPro" id="IPR011529">
    <property type="entry name" value="Glu_5kinase"/>
</dbReference>
<dbReference type="InterPro" id="IPR005715">
    <property type="entry name" value="Glu_5kinase/COase_Synthase"/>
</dbReference>
<dbReference type="InterPro" id="IPR019797">
    <property type="entry name" value="Glutamate_5-kinase_CS"/>
</dbReference>
<dbReference type="InterPro" id="IPR002478">
    <property type="entry name" value="PUA"/>
</dbReference>
<dbReference type="InterPro" id="IPR015947">
    <property type="entry name" value="PUA-like_sf"/>
</dbReference>
<dbReference type="InterPro" id="IPR036974">
    <property type="entry name" value="PUA_sf"/>
</dbReference>
<dbReference type="NCBIfam" id="TIGR01027">
    <property type="entry name" value="proB"/>
    <property type="match status" value="1"/>
</dbReference>
<dbReference type="PANTHER" id="PTHR43654">
    <property type="entry name" value="GLUTAMATE 5-KINASE"/>
    <property type="match status" value="1"/>
</dbReference>
<dbReference type="PANTHER" id="PTHR43654:SF1">
    <property type="entry name" value="ISOPENTENYL PHOSPHATE KINASE"/>
    <property type="match status" value="1"/>
</dbReference>
<dbReference type="Pfam" id="PF00696">
    <property type="entry name" value="AA_kinase"/>
    <property type="match status" value="1"/>
</dbReference>
<dbReference type="Pfam" id="PF01472">
    <property type="entry name" value="PUA"/>
    <property type="match status" value="1"/>
</dbReference>
<dbReference type="PIRSF" id="PIRSF000729">
    <property type="entry name" value="GK"/>
    <property type="match status" value="1"/>
</dbReference>
<dbReference type="PRINTS" id="PR00474">
    <property type="entry name" value="GLU5KINASE"/>
</dbReference>
<dbReference type="SMART" id="SM00359">
    <property type="entry name" value="PUA"/>
    <property type="match status" value="1"/>
</dbReference>
<dbReference type="SUPFAM" id="SSF53633">
    <property type="entry name" value="Carbamate kinase-like"/>
    <property type="match status" value="1"/>
</dbReference>
<dbReference type="SUPFAM" id="SSF88697">
    <property type="entry name" value="PUA domain-like"/>
    <property type="match status" value="1"/>
</dbReference>
<dbReference type="PROSITE" id="PS00902">
    <property type="entry name" value="GLUTAMATE_5_KINASE"/>
    <property type="match status" value="1"/>
</dbReference>
<dbReference type="PROSITE" id="PS50890">
    <property type="entry name" value="PUA"/>
    <property type="match status" value="1"/>
</dbReference>
<evidence type="ECO:0000255" key="1">
    <source>
        <dbReference type="HAMAP-Rule" id="MF_00456"/>
    </source>
</evidence>
<protein>
    <recommendedName>
        <fullName evidence="1">Glutamate 5-kinase</fullName>
        <ecNumber evidence="1">2.7.2.11</ecNumber>
    </recommendedName>
    <alternativeName>
        <fullName evidence="1">Gamma-glutamyl kinase</fullName>
        <shortName evidence="1">GK</shortName>
    </alternativeName>
</protein>
<accession>A7MWT6</accession>
<sequence>MTTNQQNAVVSQPQTVVVKLGTSVLTGGTLALNRAHMVELARQCAELKKQGHSVVMVSSGAIAAGREHLGYPALPNEMASKQLLAAVGQSRLIQTWESLFGIYGIKIGQMLLTRADLDDRERFLNARDTINALVANDIIPIVNENDAVATNEIKVGDNDNLSALVGILCGADKLLLLTDQKGLFTADPRKDPNAELIKEVKTIDDTLRKIAGGSGTTLGTGGMATKLQAADIARRAGIEVIIAAGSAPNVIFDSLSSEPQGTRFLPCEEALENRKRWILAGPAASGDIIIDDGAVNAVVGKGSSLLAKGVIKVSGDFARGEVARVTNSHGKLVARGISAYSSEDLAKIAGKHSKDIISILGHDYGSEVIHRDDLVVIQE</sequence>
<proteinExistence type="inferred from homology"/>
<keyword id="KW-0028">Amino-acid biosynthesis</keyword>
<keyword id="KW-0067">ATP-binding</keyword>
<keyword id="KW-0963">Cytoplasm</keyword>
<keyword id="KW-0418">Kinase</keyword>
<keyword id="KW-0547">Nucleotide-binding</keyword>
<keyword id="KW-0641">Proline biosynthesis</keyword>
<keyword id="KW-0808">Transferase</keyword>
<name>PROB_VIBC1</name>
<reference key="1">
    <citation type="submission" date="2007-08" db="EMBL/GenBank/DDBJ databases">
        <authorList>
            <consortium name="The Vibrio harveyi Genome Sequencing Project"/>
            <person name="Bassler B."/>
            <person name="Clifton S.W."/>
            <person name="Fulton L."/>
            <person name="Delehaunty K."/>
            <person name="Fronick C."/>
            <person name="Harrison M."/>
            <person name="Markivic C."/>
            <person name="Fulton R."/>
            <person name="Tin-Wollam A.-M."/>
            <person name="Shah N."/>
            <person name="Pepin K."/>
            <person name="Nash W."/>
            <person name="Thiruvilangam P."/>
            <person name="Bhonagiri V."/>
            <person name="Waters C."/>
            <person name="Tu K.C."/>
            <person name="Irgon J."/>
            <person name="Wilson R.K."/>
        </authorList>
    </citation>
    <scope>NUCLEOTIDE SEQUENCE [LARGE SCALE GENOMIC DNA]</scope>
    <source>
        <strain>ATCC BAA-1116 / BB120</strain>
    </source>
</reference>
<organism>
    <name type="scientific">Vibrio campbellii (strain ATCC BAA-1116)</name>
    <dbReference type="NCBI Taxonomy" id="2902295"/>
    <lineage>
        <taxon>Bacteria</taxon>
        <taxon>Pseudomonadati</taxon>
        <taxon>Pseudomonadota</taxon>
        <taxon>Gammaproteobacteria</taxon>
        <taxon>Vibrionales</taxon>
        <taxon>Vibrionaceae</taxon>
        <taxon>Vibrio</taxon>
    </lineage>
</organism>
<feature type="chain" id="PRO_1000081117" description="Glutamate 5-kinase">
    <location>
        <begin position="1"/>
        <end position="379"/>
    </location>
</feature>
<feature type="domain" description="PUA" evidence="1">
    <location>
        <begin position="285"/>
        <end position="363"/>
    </location>
</feature>
<feature type="binding site" evidence="1">
    <location>
        <position position="19"/>
    </location>
    <ligand>
        <name>ATP</name>
        <dbReference type="ChEBI" id="CHEBI:30616"/>
    </ligand>
</feature>
<feature type="binding site" evidence="1">
    <location>
        <position position="59"/>
    </location>
    <ligand>
        <name>substrate</name>
    </ligand>
</feature>
<feature type="binding site" evidence="1">
    <location>
        <position position="146"/>
    </location>
    <ligand>
        <name>substrate</name>
    </ligand>
</feature>
<feature type="binding site" evidence="1">
    <location>
        <position position="158"/>
    </location>
    <ligand>
        <name>substrate</name>
    </ligand>
</feature>
<feature type="binding site" evidence="1">
    <location>
        <begin position="178"/>
        <end position="179"/>
    </location>
    <ligand>
        <name>ATP</name>
        <dbReference type="ChEBI" id="CHEBI:30616"/>
    </ligand>
</feature>
<feature type="binding site" evidence="1">
    <location>
        <begin position="220"/>
        <end position="226"/>
    </location>
    <ligand>
        <name>ATP</name>
        <dbReference type="ChEBI" id="CHEBI:30616"/>
    </ligand>
</feature>